<evidence type="ECO:0000255" key="1">
    <source>
        <dbReference type="HAMAP-Rule" id="MF_00054"/>
    </source>
</evidence>
<dbReference type="EMBL" id="AE008692">
    <property type="protein sequence ID" value="AAV89139.1"/>
    <property type="molecule type" value="Genomic_DNA"/>
</dbReference>
<dbReference type="RefSeq" id="WP_011240420.1">
    <property type="nucleotide sequence ID" value="NZ_CP035711.1"/>
</dbReference>
<dbReference type="SMR" id="Q5NQ66"/>
<dbReference type="STRING" id="264203.ZMO0515"/>
<dbReference type="GeneID" id="79904295"/>
<dbReference type="KEGG" id="zmo:ZMO0515"/>
<dbReference type="eggNOG" id="COG0480">
    <property type="taxonomic scope" value="Bacteria"/>
</dbReference>
<dbReference type="HOGENOM" id="CLU_002794_4_1_5"/>
<dbReference type="Proteomes" id="UP000001173">
    <property type="component" value="Chromosome"/>
</dbReference>
<dbReference type="GO" id="GO:0005737">
    <property type="term" value="C:cytoplasm"/>
    <property type="evidence" value="ECO:0007669"/>
    <property type="project" value="UniProtKB-SubCell"/>
</dbReference>
<dbReference type="GO" id="GO:0005525">
    <property type="term" value="F:GTP binding"/>
    <property type="evidence" value="ECO:0007669"/>
    <property type="project" value="UniProtKB-UniRule"/>
</dbReference>
<dbReference type="GO" id="GO:0003924">
    <property type="term" value="F:GTPase activity"/>
    <property type="evidence" value="ECO:0007669"/>
    <property type="project" value="InterPro"/>
</dbReference>
<dbReference type="GO" id="GO:0003746">
    <property type="term" value="F:translation elongation factor activity"/>
    <property type="evidence" value="ECO:0007669"/>
    <property type="project" value="UniProtKB-UniRule"/>
</dbReference>
<dbReference type="GO" id="GO:0032790">
    <property type="term" value="P:ribosome disassembly"/>
    <property type="evidence" value="ECO:0007669"/>
    <property type="project" value="TreeGrafter"/>
</dbReference>
<dbReference type="CDD" id="cd01886">
    <property type="entry name" value="EF-G"/>
    <property type="match status" value="1"/>
</dbReference>
<dbReference type="CDD" id="cd16262">
    <property type="entry name" value="EFG_III"/>
    <property type="match status" value="1"/>
</dbReference>
<dbReference type="CDD" id="cd01434">
    <property type="entry name" value="EFG_mtEFG1_IV"/>
    <property type="match status" value="1"/>
</dbReference>
<dbReference type="CDD" id="cd03713">
    <property type="entry name" value="EFG_mtEFG_C"/>
    <property type="match status" value="1"/>
</dbReference>
<dbReference type="CDD" id="cd04088">
    <property type="entry name" value="EFG_mtEFG_II"/>
    <property type="match status" value="1"/>
</dbReference>
<dbReference type="FunFam" id="2.40.30.10:FF:000006">
    <property type="entry name" value="Elongation factor G"/>
    <property type="match status" value="1"/>
</dbReference>
<dbReference type="FunFam" id="3.30.230.10:FF:000003">
    <property type="entry name" value="Elongation factor G"/>
    <property type="match status" value="1"/>
</dbReference>
<dbReference type="FunFam" id="3.30.70.240:FF:000001">
    <property type="entry name" value="Elongation factor G"/>
    <property type="match status" value="1"/>
</dbReference>
<dbReference type="FunFam" id="3.30.70.870:FF:000001">
    <property type="entry name" value="Elongation factor G"/>
    <property type="match status" value="1"/>
</dbReference>
<dbReference type="FunFam" id="3.40.50.300:FF:000029">
    <property type="entry name" value="Elongation factor G"/>
    <property type="match status" value="1"/>
</dbReference>
<dbReference type="Gene3D" id="3.30.230.10">
    <property type="match status" value="1"/>
</dbReference>
<dbReference type="Gene3D" id="3.30.70.240">
    <property type="match status" value="1"/>
</dbReference>
<dbReference type="Gene3D" id="3.30.70.870">
    <property type="entry name" value="Elongation Factor G (Translational Gtpase), domain 3"/>
    <property type="match status" value="1"/>
</dbReference>
<dbReference type="Gene3D" id="3.40.50.300">
    <property type="entry name" value="P-loop containing nucleotide triphosphate hydrolases"/>
    <property type="match status" value="1"/>
</dbReference>
<dbReference type="Gene3D" id="2.40.30.10">
    <property type="entry name" value="Translation factors"/>
    <property type="match status" value="1"/>
</dbReference>
<dbReference type="HAMAP" id="MF_00054_B">
    <property type="entry name" value="EF_G_EF_2_B"/>
    <property type="match status" value="1"/>
</dbReference>
<dbReference type="InterPro" id="IPR053905">
    <property type="entry name" value="EF-G-like_DII"/>
</dbReference>
<dbReference type="InterPro" id="IPR041095">
    <property type="entry name" value="EFG_II"/>
</dbReference>
<dbReference type="InterPro" id="IPR009022">
    <property type="entry name" value="EFG_III"/>
</dbReference>
<dbReference type="InterPro" id="IPR035647">
    <property type="entry name" value="EFG_III/V"/>
</dbReference>
<dbReference type="InterPro" id="IPR047872">
    <property type="entry name" value="EFG_IV"/>
</dbReference>
<dbReference type="InterPro" id="IPR035649">
    <property type="entry name" value="EFG_V"/>
</dbReference>
<dbReference type="InterPro" id="IPR000640">
    <property type="entry name" value="EFG_V-like"/>
</dbReference>
<dbReference type="InterPro" id="IPR031157">
    <property type="entry name" value="G_TR_CS"/>
</dbReference>
<dbReference type="InterPro" id="IPR027417">
    <property type="entry name" value="P-loop_NTPase"/>
</dbReference>
<dbReference type="InterPro" id="IPR020568">
    <property type="entry name" value="Ribosomal_Su5_D2-typ_SF"/>
</dbReference>
<dbReference type="InterPro" id="IPR014721">
    <property type="entry name" value="Ribsml_uS5_D2-typ_fold_subgr"/>
</dbReference>
<dbReference type="InterPro" id="IPR005225">
    <property type="entry name" value="Small_GTP-bd"/>
</dbReference>
<dbReference type="InterPro" id="IPR000795">
    <property type="entry name" value="T_Tr_GTP-bd_dom"/>
</dbReference>
<dbReference type="InterPro" id="IPR009000">
    <property type="entry name" value="Transl_B-barrel_sf"/>
</dbReference>
<dbReference type="InterPro" id="IPR004540">
    <property type="entry name" value="Transl_elong_EFG/EF2"/>
</dbReference>
<dbReference type="InterPro" id="IPR005517">
    <property type="entry name" value="Transl_elong_EFG/EF2_IV"/>
</dbReference>
<dbReference type="NCBIfam" id="TIGR00484">
    <property type="entry name" value="EF-G"/>
    <property type="match status" value="1"/>
</dbReference>
<dbReference type="NCBIfam" id="NF009379">
    <property type="entry name" value="PRK12740.1-3"/>
    <property type="match status" value="1"/>
</dbReference>
<dbReference type="NCBIfam" id="NF009381">
    <property type="entry name" value="PRK12740.1-5"/>
    <property type="match status" value="1"/>
</dbReference>
<dbReference type="NCBIfam" id="TIGR00231">
    <property type="entry name" value="small_GTP"/>
    <property type="match status" value="1"/>
</dbReference>
<dbReference type="PANTHER" id="PTHR43261:SF1">
    <property type="entry name" value="RIBOSOME-RELEASING FACTOR 2, MITOCHONDRIAL"/>
    <property type="match status" value="1"/>
</dbReference>
<dbReference type="PANTHER" id="PTHR43261">
    <property type="entry name" value="TRANSLATION ELONGATION FACTOR G-RELATED"/>
    <property type="match status" value="1"/>
</dbReference>
<dbReference type="Pfam" id="PF22042">
    <property type="entry name" value="EF-G_D2"/>
    <property type="match status" value="1"/>
</dbReference>
<dbReference type="Pfam" id="PF00679">
    <property type="entry name" value="EFG_C"/>
    <property type="match status" value="1"/>
</dbReference>
<dbReference type="Pfam" id="PF14492">
    <property type="entry name" value="EFG_III"/>
    <property type="match status" value="1"/>
</dbReference>
<dbReference type="Pfam" id="PF03764">
    <property type="entry name" value="EFG_IV"/>
    <property type="match status" value="1"/>
</dbReference>
<dbReference type="Pfam" id="PF00009">
    <property type="entry name" value="GTP_EFTU"/>
    <property type="match status" value="1"/>
</dbReference>
<dbReference type="PRINTS" id="PR00315">
    <property type="entry name" value="ELONGATNFCT"/>
</dbReference>
<dbReference type="SMART" id="SM00838">
    <property type="entry name" value="EFG_C"/>
    <property type="match status" value="1"/>
</dbReference>
<dbReference type="SMART" id="SM00889">
    <property type="entry name" value="EFG_IV"/>
    <property type="match status" value="1"/>
</dbReference>
<dbReference type="SUPFAM" id="SSF54980">
    <property type="entry name" value="EF-G C-terminal domain-like"/>
    <property type="match status" value="2"/>
</dbReference>
<dbReference type="SUPFAM" id="SSF52540">
    <property type="entry name" value="P-loop containing nucleoside triphosphate hydrolases"/>
    <property type="match status" value="1"/>
</dbReference>
<dbReference type="SUPFAM" id="SSF54211">
    <property type="entry name" value="Ribosomal protein S5 domain 2-like"/>
    <property type="match status" value="1"/>
</dbReference>
<dbReference type="SUPFAM" id="SSF50447">
    <property type="entry name" value="Translation proteins"/>
    <property type="match status" value="1"/>
</dbReference>
<dbReference type="PROSITE" id="PS00301">
    <property type="entry name" value="G_TR_1"/>
    <property type="match status" value="1"/>
</dbReference>
<dbReference type="PROSITE" id="PS51722">
    <property type="entry name" value="G_TR_2"/>
    <property type="match status" value="1"/>
</dbReference>
<name>EFG_ZYMMO</name>
<protein>
    <recommendedName>
        <fullName evidence="1">Elongation factor G</fullName>
        <shortName evidence="1">EF-G</shortName>
    </recommendedName>
</protein>
<comment type="function">
    <text evidence="1">Catalyzes the GTP-dependent ribosomal translocation step during translation elongation. During this step, the ribosome changes from the pre-translocational (PRE) to the post-translocational (POST) state as the newly formed A-site-bound peptidyl-tRNA and P-site-bound deacylated tRNA move to the P and E sites, respectively. Catalyzes the coordinated movement of the two tRNA molecules, the mRNA and conformational changes in the ribosome.</text>
</comment>
<comment type="subcellular location">
    <subcellularLocation>
        <location evidence="1">Cytoplasm</location>
    </subcellularLocation>
</comment>
<comment type="similarity">
    <text evidence="1">Belongs to the TRAFAC class translation factor GTPase superfamily. Classic translation factor GTPase family. EF-G/EF-2 subfamily.</text>
</comment>
<proteinExistence type="inferred from homology"/>
<organism>
    <name type="scientific">Zymomonas mobilis subsp. mobilis (strain ATCC 31821 / ZM4 / CP4)</name>
    <dbReference type="NCBI Taxonomy" id="264203"/>
    <lineage>
        <taxon>Bacteria</taxon>
        <taxon>Pseudomonadati</taxon>
        <taxon>Pseudomonadota</taxon>
        <taxon>Alphaproteobacteria</taxon>
        <taxon>Sphingomonadales</taxon>
        <taxon>Zymomonadaceae</taxon>
        <taxon>Zymomonas</taxon>
    </lineage>
</organism>
<keyword id="KW-0963">Cytoplasm</keyword>
<keyword id="KW-0251">Elongation factor</keyword>
<keyword id="KW-0342">GTP-binding</keyword>
<keyword id="KW-0547">Nucleotide-binding</keyword>
<keyword id="KW-0648">Protein biosynthesis</keyword>
<keyword id="KW-1185">Reference proteome</keyword>
<reference key="1">
    <citation type="journal article" date="2005" name="Nat. Biotechnol.">
        <title>The genome sequence of the ethanologenic bacterium Zymomonas mobilis ZM4.</title>
        <authorList>
            <person name="Seo J.-S."/>
            <person name="Chong H."/>
            <person name="Park H.S."/>
            <person name="Yoon K.-O."/>
            <person name="Jung C."/>
            <person name="Kim J.J."/>
            <person name="Hong J.H."/>
            <person name="Kim H."/>
            <person name="Kim J.-H."/>
            <person name="Kil J.-I."/>
            <person name="Park C.J."/>
            <person name="Oh H.-M."/>
            <person name="Lee J.-S."/>
            <person name="Jin S.-J."/>
            <person name="Um H.-W."/>
            <person name="Lee H.-J."/>
            <person name="Oh S.-J."/>
            <person name="Kim J.Y."/>
            <person name="Kang H.L."/>
            <person name="Lee S.Y."/>
            <person name="Lee K.J."/>
            <person name="Kang H.S."/>
        </authorList>
    </citation>
    <scope>NUCLEOTIDE SEQUENCE [LARGE SCALE GENOMIC DNA]</scope>
    <source>
        <strain>ATCC 31821 / ZM4 / CP4</strain>
    </source>
</reference>
<sequence length="690" mass="76553">MARKYPLDKYRNIGIMAHIDAGKTTTTERILFYTGKSYKIGEVHEGTATMDWMEQEQERGITITSAATTCFWNDHRINIIDTPGHVDFTIEVERSLRVLDGAVACFDGVAGVEPQSETVWRQAEKYHVPRMCFVNKLDRTGANFMRCVDMIRDRLGARPLVLYLPIGIESDFKGLVDLVENRAIIWLEESLGAKFEYQEIPEEYKAEAEAARAEMIEMAVEQDDAAMEAYLEGNEPDADTLKKLIRKGTLAQDFVPVLCGSAFKNKGVQPLLDAVVDFLPSPLDIPPVEGVKMDGETKDSRKPSDDEPFSALAFKIMNDPFVGSLTFARIYSGKLTKGTVLNSVKDKREKVGRMLLMHANSREDLEEAYAGDIVALVGMKETTTGDTLCAPNAPIILERMEFPEPVIEVAVEPKTKADQEKMGLALNRLAAEDPSFRVASDFESGQTIIKGMGELHLDILVDRMKREFKVEANVGAPQVAYRESLARPVEVDYTHKKQSGGSGQFGRVKVNLVPSERGAGIQFFDEIKGGNIPREYIPSVEKGMRETAETGSLIGFPIIDFEIHLTDGAYHDVDSSALAFEIAGRGAMREAAQKAGIKLLEPVMRVEVITPEDYLGDVIGDMNSRRGQIQGTDTRGNAQVVEAMVPLANMFGYVNQLRSFTQGRAQYSMQFSHYDEVPANVADELKSKMA</sequence>
<feature type="chain" id="PRO_0000091275" description="Elongation factor G">
    <location>
        <begin position="1"/>
        <end position="690"/>
    </location>
</feature>
<feature type="domain" description="tr-type G">
    <location>
        <begin position="8"/>
        <end position="283"/>
    </location>
</feature>
<feature type="binding site" evidence="1">
    <location>
        <begin position="17"/>
        <end position="24"/>
    </location>
    <ligand>
        <name>GTP</name>
        <dbReference type="ChEBI" id="CHEBI:37565"/>
    </ligand>
</feature>
<feature type="binding site" evidence="1">
    <location>
        <begin position="81"/>
        <end position="85"/>
    </location>
    <ligand>
        <name>GTP</name>
        <dbReference type="ChEBI" id="CHEBI:37565"/>
    </ligand>
</feature>
<feature type="binding site" evidence="1">
    <location>
        <begin position="135"/>
        <end position="138"/>
    </location>
    <ligand>
        <name>GTP</name>
        <dbReference type="ChEBI" id="CHEBI:37565"/>
    </ligand>
</feature>
<accession>Q5NQ66</accession>
<gene>
    <name evidence="1" type="primary">fusA</name>
    <name type="ordered locus">ZMO0515</name>
</gene>